<gene>
    <name type="primary">VN1R3</name>
    <name type="synonym">V1RL3</name>
</gene>
<comment type="function">
    <text>Putative pheromone receptor.</text>
</comment>
<comment type="subcellular location">
    <subcellularLocation>
        <location>Cell membrane</location>
        <topology>Multi-pass membrane protein</topology>
    </subcellularLocation>
</comment>
<comment type="similarity">
    <text evidence="2">Belongs to the G-protein coupled receptor 1 family.</text>
</comment>
<name>VN1R3_PANTR</name>
<dbReference type="EMBL" id="AY312468">
    <property type="protein sequence ID" value="AAP85609.1"/>
    <property type="molecule type" value="Genomic_DNA"/>
</dbReference>
<dbReference type="RefSeq" id="NP_001161016.1">
    <property type="nucleotide sequence ID" value="NM_001167544.1"/>
</dbReference>
<dbReference type="SMR" id="Q7YRP3"/>
<dbReference type="STRING" id="9598.ENSPTRP00000054621"/>
<dbReference type="GlyCosmos" id="Q7YRP3">
    <property type="glycosylation" value="1 site, No reported glycans"/>
</dbReference>
<dbReference type="PaxDb" id="9598-ENSPTRP00000054621"/>
<dbReference type="Ensembl" id="ENSPTRT00000062070.2">
    <property type="protein sequence ID" value="ENSPTRP00000054621.1"/>
    <property type="gene ID" value="ENSPTRG00000032517.2"/>
</dbReference>
<dbReference type="GeneID" id="100312580"/>
<dbReference type="KEGG" id="ptr:100312580"/>
<dbReference type="CTD" id="317703"/>
<dbReference type="eggNOG" id="ENOG502RD1P">
    <property type="taxonomic scope" value="Eukaryota"/>
</dbReference>
<dbReference type="GeneTree" id="ENSGT00960000186612"/>
<dbReference type="HOGENOM" id="CLU_058641_1_0_1"/>
<dbReference type="InParanoid" id="Q7YRP3"/>
<dbReference type="OMA" id="GKWNSIN"/>
<dbReference type="Proteomes" id="UP000002277">
    <property type="component" value="Chromosome 16"/>
</dbReference>
<dbReference type="Bgee" id="ENSPTRG00000032517">
    <property type="expression patterns" value="Expressed in testis and 5 other cell types or tissues"/>
</dbReference>
<dbReference type="GO" id="GO:0005886">
    <property type="term" value="C:plasma membrane"/>
    <property type="evidence" value="ECO:0007669"/>
    <property type="project" value="UniProtKB-SubCell"/>
</dbReference>
<dbReference type="GO" id="GO:0016503">
    <property type="term" value="F:pheromone receptor activity"/>
    <property type="evidence" value="ECO:0007669"/>
    <property type="project" value="InterPro"/>
</dbReference>
<dbReference type="GO" id="GO:0019236">
    <property type="term" value="P:response to pheromone"/>
    <property type="evidence" value="ECO:0007669"/>
    <property type="project" value="UniProtKB-KW"/>
</dbReference>
<dbReference type="GO" id="GO:0007606">
    <property type="term" value="P:sensory perception of chemical stimulus"/>
    <property type="evidence" value="ECO:0007669"/>
    <property type="project" value="UniProtKB-ARBA"/>
</dbReference>
<dbReference type="CDD" id="cd13949">
    <property type="entry name" value="7tm_V1R_pheromone"/>
    <property type="match status" value="1"/>
</dbReference>
<dbReference type="FunFam" id="1.20.1070.10:FF:000033">
    <property type="entry name" value="Vomeronasal type-1 receptor"/>
    <property type="match status" value="1"/>
</dbReference>
<dbReference type="Gene3D" id="1.20.1070.10">
    <property type="entry name" value="Rhodopsin 7-helix transmembrane proteins"/>
    <property type="match status" value="1"/>
</dbReference>
<dbReference type="InterPro" id="IPR017452">
    <property type="entry name" value="GPCR_Rhodpsn_7TM"/>
</dbReference>
<dbReference type="InterPro" id="IPR004072">
    <property type="entry name" value="Vmron_rcpt_1"/>
</dbReference>
<dbReference type="PANTHER" id="PTHR24062">
    <property type="entry name" value="VOMERONASAL TYPE-1 RECEPTOR"/>
    <property type="match status" value="1"/>
</dbReference>
<dbReference type="Pfam" id="PF03402">
    <property type="entry name" value="V1R"/>
    <property type="match status" value="1"/>
</dbReference>
<dbReference type="PRINTS" id="PR01534">
    <property type="entry name" value="VOMERONASL1R"/>
</dbReference>
<dbReference type="SUPFAM" id="SSF81321">
    <property type="entry name" value="Family A G protein-coupled receptor-like"/>
    <property type="match status" value="1"/>
</dbReference>
<dbReference type="PROSITE" id="PS50262">
    <property type="entry name" value="G_PROTEIN_RECEP_F1_2"/>
    <property type="match status" value="1"/>
</dbReference>
<protein>
    <recommendedName>
        <fullName>Vomeronasal type-1 receptor 3</fullName>
    </recommendedName>
    <alternativeName>
        <fullName>V1r-like receptor 3</fullName>
    </alternativeName>
</protein>
<keyword id="KW-1003">Cell membrane</keyword>
<keyword id="KW-0297">G-protein coupled receptor</keyword>
<keyword id="KW-0325">Glycoprotein</keyword>
<keyword id="KW-0472">Membrane</keyword>
<keyword id="KW-0589">Pheromone response</keyword>
<keyword id="KW-0675">Receptor</keyword>
<keyword id="KW-1185">Reference proteome</keyword>
<keyword id="KW-0807">Transducer</keyword>
<keyword id="KW-0812">Transmembrane</keyword>
<keyword id="KW-1133">Transmembrane helix</keyword>
<accession>Q7YRP3</accession>
<organism>
    <name type="scientific">Pan troglodytes</name>
    <name type="common">Chimpanzee</name>
    <dbReference type="NCBI Taxonomy" id="9598"/>
    <lineage>
        <taxon>Eukaryota</taxon>
        <taxon>Metazoa</taxon>
        <taxon>Chordata</taxon>
        <taxon>Craniata</taxon>
        <taxon>Vertebrata</taxon>
        <taxon>Euteleostomi</taxon>
        <taxon>Mammalia</taxon>
        <taxon>Eutheria</taxon>
        <taxon>Euarchontoglires</taxon>
        <taxon>Primates</taxon>
        <taxon>Haplorrhini</taxon>
        <taxon>Catarrhini</taxon>
        <taxon>Hominidae</taxon>
        <taxon>Pan</taxon>
    </lineage>
</organism>
<feature type="chain" id="PRO_0000070216" description="Vomeronasal type-1 receptor 3">
    <location>
        <begin position="1"/>
        <end position="310"/>
    </location>
</feature>
<feature type="topological domain" description="Extracellular" evidence="1">
    <location>
        <begin position="1"/>
        <end position="5"/>
    </location>
</feature>
<feature type="transmembrane region" description="Helical; Name=1" evidence="1">
    <location>
        <begin position="6"/>
        <end position="26"/>
    </location>
</feature>
<feature type="topological domain" description="Cytoplasmic" evidence="1">
    <location>
        <begin position="27"/>
        <end position="50"/>
    </location>
</feature>
<feature type="transmembrane region" description="Helical; Name=2" evidence="1">
    <location>
        <begin position="51"/>
        <end position="71"/>
    </location>
</feature>
<feature type="topological domain" description="Extracellular" evidence="1">
    <location>
        <begin position="72"/>
        <end position="91"/>
    </location>
</feature>
<feature type="transmembrane region" description="Helical; Name=3" evidence="1">
    <location>
        <begin position="92"/>
        <end position="112"/>
    </location>
</feature>
<feature type="topological domain" description="Cytoplasmic" evidence="1">
    <location>
        <begin position="113"/>
        <end position="129"/>
    </location>
</feature>
<feature type="transmembrane region" description="Helical; Name=4" evidence="1">
    <location>
        <begin position="130"/>
        <end position="150"/>
    </location>
</feature>
<feature type="topological domain" description="Extracellular" evidence="1">
    <location>
        <begin position="151"/>
        <end position="186"/>
    </location>
</feature>
<feature type="transmembrane region" description="Helical; Name=5" evidence="1">
    <location>
        <begin position="187"/>
        <end position="207"/>
    </location>
</feature>
<feature type="topological domain" description="Cytoplasmic" evidence="1">
    <location>
        <begin position="208"/>
        <end position="235"/>
    </location>
</feature>
<feature type="transmembrane region" description="Helical; Name=6" evidence="1">
    <location>
        <begin position="236"/>
        <end position="258"/>
    </location>
</feature>
<feature type="topological domain" description="Extracellular" evidence="1">
    <location>
        <begin position="259"/>
        <end position="263"/>
    </location>
</feature>
<feature type="transmembrane region" description="Helical; Name=7" evidence="1">
    <location>
        <begin position="264"/>
        <end position="284"/>
    </location>
</feature>
<feature type="topological domain" description="Cytoplasmic" evidence="1">
    <location>
        <begin position="285"/>
        <end position="310"/>
    </location>
</feature>
<feature type="glycosylation site" description="N-linked (GlcNAc...) asparagine" evidence="1">
    <location>
        <position position="158"/>
    </location>
</feature>
<proteinExistence type="inferred from homology"/>
<evidence type="ECO:0000255" key="1"/>
<evidence type="ECO:0000255" key="2">
    <source>
        <dbReference type="PROSITE-ProRule" id="PRU00521"/>
    </source>
</evidence>
<sequence length="310" mass="34524">MASKDFAIGMILSQIMVGFLGNFFLLYHYSFLHFTRGMLQSTDLTLKHLTIANSLVILSKGIPQTMAAFGLKDSLSDIGCKFVFYVHRVGRAVCTGNACLLSVFQVITISSSEFRWAELKLHAHKYIRSFILVLCWILNTLVNITVPLHVTGKWNSINSTKTNDYGYCSGGSRSRIPHSLHIVLLSSLDVLCLGLMTLASGSMVFILHRLKQQVQHIHGTNLSPRSSPESRVTQSILVLVSTLCYFTRSPPSLHMSLFPNPSWWPLNASALITACFPTVSPFVLMSRHPRIPRLGSACCGRNPQFPKLVR</sequence>
<reference key="1">
    <citation type="journal article" date="2003" name="Proc. Natl. Acad. Sci. U.S.A.">
        <title>Evolutionary deterioration of the vomeronasal pheromone transduction pathway in catarrhine primates.</title>
        <authorList>
            <person name="Zhang J."/>
            <person name="Webb D.M."/>
        </authorList>
    </citation>
    <scope>NUCLEOTIDE SEQUENCE [GENOMIC DNA]</scope>
</reference>